<accession>P11601</accession>
<keyword id="KW-0004">4Fe-4S</keyword>
<keyword id="KW-0150">Chloroplast</keyword>
<keyword id="KW-0249">Electron transport</keyword>
<keyword id="KW-0408">Iron</keyword>
<keyword id="KW-0411">Iron-sulfur</keyword>
<keyword id="KW-0472">Membrane</keyword>
<keyword id="KW-0479">Metal-binding</keyword>
<keyword id="KW-0560">Oxidoreductase</keyword>
<keyword id="KW-0602">Photosynthesis</keyword>
<keyword id="KW-0603">Photosystem I</keyword>
<keyword id="KW-0934">Plastid</keyword>
<keyword id="KW-1185">Reference proteome</keyword>
<keyword id="KW-0677">Repeat</keyword>
<keyword id="KW-0793">Thylakoid</keyword>
<keyword id="KW-0813">Transport</keyword>
<sequence>MSHSVKIYDTCIGCTHCVRACPTDVLEMIPWDGCKAKQIASAPRTEDCVGCKRCESACPTDFLSVRVYLGPETTRSMALSY</sequence>
<comment type="function">
    <text>Apoprotein for the two 4Fe-4S centers FA and FB of photosystem I (PSI); essential for photochemical activity. FB is the terminal electron acceptor of PSI, donating electrons to ferredoxin. The C-terminus interacts with PsaA/B/D and helps assemble the protein into the PSI complex. Required for binding of PsaD and PsaE to PSI. PSI is a plastocyanin-ferredoxin oxidoreductase, converting photonic excitation into a charge separation, which transfers an electron from the donor P700 chlorophyll pair to the spectroscopically characterized acceptors A0, A1, FX, FA and FB in turn.</text>
</comment>
<comment type="catalytic activity">
    <reaction evidence="2">
        <text>reduced [plastocyanin] + hnu + oxidized [2Fe-2S]-[ferredoxin] = oxidized [plastocyanin] + reduced [2Fe-2S]-[ferredoxin]</text>
        <dbReference type="Rhea" id="RHEA:30407"/>
        <dbReference type="Rhea" id="RHEA-COMP:10000"/>
        <dbReference type="Rhea" id="RHEA-COMP:10001"/>
        <dbReference type="Rhea" id="RHEA-COMP:10039"/>
        <dbReference type="Rhea" id="RHEA-COMP:10040"/>
        <dbReference type="ChEBI" id="CHEBI:29036"/>
        <dbReference type="ChEBI" id="CHEBI:30212"/>
        <dbReference type="ChEBI" id="CHEBI:33737"/>
        <dbReference type="ChEBI" id="CHEBI:33738"/>
        <dbReference type="ChEBI" id="CHEBI:49552"/>
        <dbReference type="EC" id="1.97.1.12"/>
    </reaction>
</comment>
<comment type="cofactor">
    <cofactor evidence="2">
        <name>[4Fe-4S] cluster</name>
        <dbReference type="ChEBI" id="CHEBI:49883"/>
    </cofactor>
    <text evidence="2">Binds 2 [4Fe-4S] clusters. Cluster 2 is most probably the spectroscopically characterized electron acceptor FA and cluster 1 is most probably FB.</text>
</comment>
<comment type="subunit">
    <text evidence="2">The eukaryotic PSI reaction center is composed of at least 11 subunits.</text>
</comment>
<comment type="subcellular location">
    <subcellularLocation>
        <location evidence="2">Plastid</location>
        <location evidence="2">Chloroplast thylakoid membrane</location>
        <topology evidence="2">Peripheral membrane protein</topology>
        <orientation evidence="2">Stromal side</orientation>
    </subcellularLocation>
</comment>
<dbReference type="EC" id="1.97.1.12" evidence="2"/>
<dbReference type="EMBL" id="X13159">
    <property type="protein sequence ID" value="CAA31557.1"/>
    <property type="molecule type" value="Genomic_DNA"/>
</dbReference>
<dbReference type="EMBL" id="X86563">
    <property type="protein sequence ID" value="CAB75860.1"/>
    <property type="molecule type" value="Genomic_DNA"/>
</dbReference>
<dbReference type="PIR" id="JU0008">
    <property type="entry name" value="FEZM1C"/>
</dbReference>
<dbReference type="RefSeq" id="NP_043088.1">
    <property type="nucleotide sequence ID" value="NC_001666.2"/>
</dbReference>
<dbReference type="SMR" id="P11601"/>
<dbReference type="FunCoup" id="P11601">
    <property type="interactions" value="456"/>
</dbReference>
<dbReference type="IntAct" id="P11601">
    <property type="interactions" value="1"/>
</dbReference>
<dbReference type="STRING" id="4577.P11601"/>
<dbReference type="PaxDb" id="4577-GRMZM5G815553_P01"/>
<dbReference type="GeneID" id="1466379"/>
<dbReference type="KEGG" id="zma:1466379"/>
<dbReference type="MaizeGDB" id="57318"/>
<dbReference type="eggNOG" id="KOG4845">
    <property type="taxonomic scope" value="Eukaryota"/>
</dbReference>
<dbReference type="HOGENOM" id="CLU_139698_8_0_1"/>
<dbReference type="InParanoid" id="P11601"/>
<dbReference type="OMA" id="GHMSHAV"/>
<dbReference type="OrthoDB" id="1865383at2759"/>
<dbReference type="Proteomes" id="UP000007305">
    <property type="component" value="Chloroplast"/>
</dbReference>
<dbReference type="GO" id="GO:0009535">
    <property type="term" value="C:chloroplast thylakoid membrane"/>
    <property type="evidence" value="ECO:0007669"/>
    <property type="project" value="UniProtKB-SubCell"/>
</dbReference>
<dbReference type="GO" id="GO:0009522">
    <property type="term" value="C:photosystem I"/>
    <property type="evidence" value="ECO:0007669"/>
    <property type="project" value="UniProtKB-KW"/>
</dbReference>
<dbReference type="GO" id="GO:0051539">
    <property type="term" value="F:4 iron, 4 sulfur cluster binding"/>
    <property type="evidence" value="ECO:0007669"/>
    <property type="project" value="UniProtKB-KW"/>
</dbReference>
<dbReference type="GO" id="GO:0009055">
    <property type="term" value="F:electron transfer activity"/>
    <property type="evidence" value="ECO:0007669"/>
    <property type="project" value="UniProtKB-UniRule"/>
</dbReference>
<dbReference type="GO" id="GO:0046872">
    <property type="term" value="F:metal ion binding"/>
    <property type="evidence" value="ECO:0007669"/>
    <property type="project" value="UniProtKB-KW"/>
</dbReference>
<dbReference type="GO" id="GO:0016491">
    <property type="term" value="F:oxidoreductase activity"/>
    <property type="evidence" value="ECO:0007669"/>
    <property type="project" value="UniProtKB-KW"/>
</dbReference>
<dbReference type="GO" id="GO:0015979">
    <property type="term" value="P:photosynthesis"/>
    <property type="evidence" value="ECO:0000318"/>
    <property type="project" value="GO_Central"/>
</dbReference>
<dbReference type="GO" id="GO:0009773">
    <property type="term" value="P:photosynthetic electron transport in photosystem I"/>
    <property type="evidence" value="ECO:0007669"/>
    <property type="project" value="InterPro"/>
</dbReference>
<dbReference type="FunFam" id="3.30.70.20:FF:000001">
    <property type="entry name" value="Photosystem I iron-sulfur center"/>
    <property type="match status" value="1"/>
</dbReference>
<dbReference type="Gene3D" id="3.30.70.20">
    <property type="match status" value="1"/>
</dbReference>
<dbReference type="HAMAP" id="MF_01303">
    <property type="entry name" value="PSI_PsaC"/>
    <property type="match status" value="1"/>
</dbReference>
<dbReference type="InterPro" id="IPR017896">
    <property type="entry name" value="4Fe4S_Fe-S-bd"/>
</dbReference>
<dbReference type="InterPro" id="IPR017900">
    <property type="entry name" value="4Fe4S_Fe_S_CS"/>
</dbReference>
<dbReference type="InterPro" id="IPR050157">
    <property type="entry name" value="PSI_iron-sulfur_center"/>
</dbReference>
<dbReference type="InterPro" id="IPR017491">
    <property type="entry name" value="PSI_PsaC"/>
</dbReference>
<dbReference type="NCBIfam" id="TIGR03048">
    <property type="entry name" value="PS_I_psaC"/>
    <property type="match status" value="1"/>
</dbReference>
<dbReference type="PANTHER" id="PTHR24960:SF79">
    <property type="entry name" value="PHOTOSYSTEM I IRON-SULFUR CENTER"/>
    <property type="match status" value="1"/>
</dbReference>
<dbReference type="PANTHER" id="PTHR24960">
    <property type="entry name" value="PHOTOSYSTEM I IRON-SULFUR CENTER-RELATED"/>
    <property type="match status" value="1"/>
</dbReference>
<dbReference type="Pfam" id="PF14697">
    <property type="entry name" value="Fer4_21"/>
    <property type="match status" value="1"/>
</dbReference>
<dbReference type="SUPFAM" id="SSF54862">
    <property type="entry name" value="4Fe-4S ferredoxins"/>
    <property type="match status" value="1"/>
</dbReference>
<dbReference type="PROSITE" id="PS00198">
    <property type="entry name" value="4FE4S_FER_1"/>
    <property type="match status" value="2"/>
</dbReference>
<dbReference type="PROSITE" id="PS51379">
    <property type="entry name" value="4FE4S_FER_2"/>
    <property type="match status" value="2"/>
</dbReference>
<gene>
    <name evidence="2" type="primary">psaC</name>
    <name type="synonym">frxA</name>
</gene>
<reference key="1">
    <citation type="journal article" date="1988" name="Plant Mol. Biol.">
        <title>Maize chloroplast genes ndhD, ndhE, and psaC. Sequences, transcripts and transcript pools.</title>
        <authorList>
            <person name="Schantz R."/>
            <person name="Bogorad L."/>
        </authorList>
        <dbReference type="AGRICOLA" id="IND92000048"/>
    </citation>
    <scope>NUCLEOTIDE SEQUENCE [LARGE SCALE GENOMIC DNA]</scope>
    <source>
        <strain>cv. B73</strain>
    </source>
</reference>
<reference key="2">
    <citation type="journal article" date="1995" name="J. Mol. Biol.">
        <title>Complete sequence of the maize chloroplast genome: gene content, hotspots of divergence and fine tuning of genetic information by transcript editing.</title>
        <authorList>
            <person name="Maier R.M."/>
            <person name="Neckermann K."/>
            <person name="Igloi G.L."/>
            <person name="Koessel H."/>
        </authorList>
    </citation>
    <scope>NUCLEOTIDE SEQUENCE [LARGE SCALE GENOMIC DNA]</scope>
    <source>
        <strain>cv. B73</strain>
    </source>
</reference>
<organism>
    <name type="scientific">Zea mays</name>
    <name type="common">Maize</name>
    <dbReference type="NCBI Taxonomy" id="4577"/>
    <lineage>
        <taxon>Eukaryota</taxon>
        <taxon>Viridiplantae</taxon>
        <taxon>Streptophyta</taxon>
        <taxon>Embryophyta</taxon>
        <taxon>Tracheophyta</taxon>
        <taxon>Spermatophyta</taxon>
        <taxon>Magnoliopsida</taxon>
        <taxon>Liliopsida</taxon>
        <taxon>Poales</taxon>
        <taxon>Poaceae</taxon>
        <taxon>PACMAD clade</taxon>
        <taxon>Panicoideae</taxon>
        <taxon>Andropogonodae</taxon>
        <taxon>Andropogoneae</taxon>
        <taxon>Tripsacinae</taxon>
        <taxon>Zea</taxon>
    </lineage>
</organism>
<geneLocation type="chloroplast"/>
<evidence type="ECO:0000250" key="1"/>
<evidence type="ECO:0000255" key="2">
    <source>
        <dbReference type="HAMAP-Rule" id="MF_01303"/>
    </source>
</evidence>
<protein>
    <recommendedName>
        <fullName evidence="2">Photosystem I iron-sulfur center</fullName>
        <ecNumber evidence="2">1.97.1.12</ecNumber>
    </recommendedName>
    <alternativeName>
        <fullName evidence="2">9 kDa polypeptide</fullName>
    </alternativeName>
    <alternativeName>
        <fullName evidence="2">PSI-C</fullName>
    </alternativeName>
    <alternativeName>
        <fullName evidence="2">Photosystem I subunit VII</fullName>
    </alternativeName>
    <alternativeName>
        <fullName evidence="2">PsaC</fullName>
    </alternativeName>
</protein>
<proteinExistence type="inferred from homology"/>
<feature type="initiator methionine" description="Removed" evidence="1">
    <location>
        <position position="1"/>
    </location>
</feature>
<feature type="chain" id="PRO_0000061987" description="Photosystem I iron-sulfur center">
    <location>
        <begin position="2"/>
        <end position="81"/>
    </location>
</feature>
<feature type="domain" description="4Fe-4S ferredoxin-type 1" evidence="2">
    <location>
        <begin position="2"/>
        <end position="31"/>
    </location>
</feature>
<feature type="domain" description="4Fe-4S ferredoxin-type 2" evidence="2">
    <location>
        <begin position="39"/>
        <end position="68"/>
    </location>
</feature>
<feature type="binding site" evidence="2">
    <location>
        <position position="11"/>
    </location>
    <ligand>
        <name>[4Fe-4S] cluster</name>
        <dbReference type="ChEBI" id="CHEBI:49883"/>
        <label>1</label>
    </ligand>
</feature>
<feature type="binding site" evidence="2">
    <location>
        <position position="14"/>
    </location>
    <ligand>
        <name>[4Fe-4S] cluster</name>
        <dbReference type="ChEBI" id="CHEBI:49883"/>
        <label>1</label>
    </ligand>
</feature>
<feature type="binding site" evidence="2">
    <location>
        <position position="17"/>
    </location>
    <ligand>
        <name>[4Fe-4S] cluster</name>
        <dbReference type="ChEBI" id="CHEBI:49883"/>
        <label>1</label>
    </ligand>
</feature>
<feature type="binding site" evidence="2">
    <location>
        <position position="21"/>
    </location>
    <ligand>
        <name>[4Fe-4S] cluster</name>
        <dbReference type="ChEBI" id="CHEBI:49883"/>
        <label>2</label>
    </ligand>
</feature>
<feature type="binding site" evidence="2">
    <location>
        <position position="48"/>
    </location>
    <ligand>
        <name>[4Fe-4S] cluster</name>
        <dbReference type="ChEBI" id="CHEBI:49883"/>
        <label>2</label>
    </ligand>
</feature>
<feature type="binding site" evidence="2">
    <location>
        <position position="51"/>
    </location>
    <ligand>
        <name>[4Fe-4S] cluster</name>
        <dbReference type="ChEBI" id="CHEBI:49883"/>
        <label>2</label>
    </ligand>
</feature>
<feature type="binding site" evidence="2">
    <location>
        <position position="54"/>
    </location>
    <ligand>
        <name>[4Fe-4S] cluster</name>
        <dbReference type="ChEBI" id="CHEBI:49883"/>
        <label>2</label>
    </ligand>
</feature>
<feature type="binding site" evidence="2">
    <location>
        <position position="58"/>
    </location>
    <ligand>
        <name>[4Fe-4S] cluster</name>
        <dbReference type="ChEBI" id="CHEBI:49883"/>
        <label>1</label>
    </ligand>
</feature>
<name>PSAC_MAIZE</name>